<proteinExistence type="evidence at transcript level"/>
<organism>
    <name type="scientific">Oncorhynchus mykiss</name>
    <name type="common">Rainbow trout</name>
    <name type="synonym">Salmo gairdneri</name>
    <dbReference type="NCBI Taxonomy" id="8022"/>
    <lineage>
        <taxon>Eukaryota</taxon>
        <taxon>Metazoa</taxon>
        <taxon>Chordata</taxon>
        <taxon>Craniata</taxon>
        <taxon>Vertebrata</taxon>
        <taxon>Euteleostomi</taxon>
        <taxon>Actinopterygii</taxon>
        <taxon>Neopterygii</taxon>
        <taxon>Teleostei</taxon>
        <taxon>Protacanthopterygii</taxon>
        <taxon>Salmoniformes</taxon>
        <taxon>Salmonidae</taxon>
        <taxon>Salmoninae</taxon>
        <taxon>Oncorhynchus</taxon>
    </lineage>
</organism>
<reference key="1">
    <citation type="submission" date="1998-01" db="EMBL/GenBank/DDBJ databases">
        <title>Cloning, sequencing and heterologous expression of CYP2K1 and CYP2K3 from sexually mature rainbow trout liver and their roles in aflatoxin B1 activation.</title>
        <authorList>
            <person name="Yang Y.-H."/>
            <person name="Miranda C.L."/>
            <person name="Wang J.-L."/>
            <person name="Buhler D.R."/>
        </authorList>
    </citation>
    <scope>NUCLEOTIDE SEQUENCE [MRNA]</scope>
    <source>
        <tissue>Liver</tissue>
    </source>
</reference>
<feature type="chain" id="PRO_0000051774" description="Cytochrome P450 2K3">
    <location>
        <begin position="1"/>
        <end position="491"/>
    </location>
</feature>
<feature type="binding site" description="axial binding residue" evidence="1">
    <location>
        <position position="434"/>
    </location>
    <ligand>
        <name>heme</name>
        <dbReference type="ChEBI" id="CHEBI:30413"/>
    </ligand>
    <ligandPart>
        <name>Fe</name>
        <dbReference type="ChEBI" id="CHEBI:18248"/>
    </ligandPart>
</feature>
<keyword id="KW-0256">Endoplasmic reticulum</keyword>
<keyword id="KW-0349">Heme</keyword>
<keyword id="KW-0408">Iron</keyword>
<keyword id="KW-0472">Membrane</keyword>
<keyword id="KW-0479">Metal-binding</keyword>
<keyword id="KW-0492">Microsome</keyword>
<keyword id="KW-0503">Monooxygenase</keyword>
<keyword id="KW-0560">Oxidoreductase</keyword>
<sequence>MSLIEGLLQTSSTVTLLGTVLFLLVLYLRSSGSSSEGQGKEPPGPRPLPLLGNMLQLDLKKPYCTLCELSKKYGSIFTFHFGPKKVVVLAGYKTVKQALVNQAEDFGDRDITPVFYDFNQGHGILFANGDSWKEMRRFALTNLRDFGMGKKGSEEKILEEIPYLIEVFEKHEGKAFDTTQSVLYAVSNIISAIVYGSRFEYTDPLFTGMADRAKESIHLTGSASIQMYNMFPWLGPWINNLTRLKKNIADMKMEVTELVRGLKETLNPHMCRGFVDSFLVRKQTLEESGHMDSFYHDDNLVFSVGNLFSAGTDTTGTTLRWGLLLMTKYPHIQDQVQEEISGVIGSRQTLVEDRKNLPYTDAVIHETQRLANIAPMSIPHTTSRDVTFQGYFIKKDDSEWESPHTLTPSHFLDEKGGFVKRDAFMAFSAGRRVCLGEGLARMELFLFFTSLLQHFRFSPPPGVTEDDLDLTPSVEFTHNPSPHQLCAVSRV</sequence>
<comment type="catalytic activity">
    <reaction>
        <text>an organic molecule + reduced [NADPH--hemoprotein reductase] + O2 = an alcohol + oxidized [NADPH--hemoprotein reductase] + H2O + H(+)</text>
        <dbReference type="Rhea" id="RHEA:17149"/>
        <dbReference type="Rhea" id="RHEA-COMP:11964"/>
        <dbReference type="Rhea" id="RHEA-COMP:11965"/>
        <dbReference type="ChEBI" id="CHEBI:15377"/>
        <dbReference type="ChEBI" id="CHEBI:15378"/>
        <dbReference type="ChEBI" id="CHEBI:15379"/>
        <dbReference type="ChEBI" id="CHEBI:30879"/>
        <dbReference type="ChEBI" id="CHEBI:57618"/>
        <dbReference type="ChEBI" id="CHEBI:58210"/>
        <dbReference type="ChEBI" id="CHEBI:142491"/>
        <dbReference type="EC" id="1.14.14.1"/>
    </reaction>
</comment>
<comment type="cofactor">
    <cofactor evidence="1">
        <name>heme</name>
        <dbReference type="ChEBI" id="CHEBI:30413"/>
    </cofactor>
</comment>
<comment type="subcellular location">
    <subcellularLocation>
        <location evidence="1">Endoplasmic reticulum membrane</location>
        <topology evidence="1">Peripheral membrane protein</topology>
    </subcellularLocation>
    <subcellularLocation>
        <location evidence="1">Microsome membrane</location>
        <topology evidence="1">Peripheral membrane protein</topology>
    </subcellularLocation>
</comment>
<comment type="similarity">
    <text evidence="2">Belongs to the cytochrome P450 family.</text>
</comment>
<accession>O93299</accession>
<name>CP2K3_ONCMY</name>
<gene>
    <name type="primary">cyp2k3</name>
</gene>
<protein>
    <recommendedName>
        <fullName>Cytochrome P450 2K3</fullName>
        <ecNumber>1.14.14.1</ecNumber>
    </recommendedName>
    <alternativeName>
        <fullName>CYPIIK3</fullName>
    </alternativeName>
    <alternativeName>
        <fullName>Cytochrome P450 LMC2</fullName>
    </alternativeName>
</protein>
<evidence type="ECO:0000250" key="1"/>
<evidence type="ECO:0000305" key="2"/>
<dbReference type="EC" id="1.14.14.1"/>
<dbReference type="EMBL" id="AF043551">
    <property type="protein sequence ID" value="AAC26494.1"/>
    <property type="molecule type" value="mRNA"/>
</dbReference>
<dbReference type="SMR" id="O93299"/>
<dbReference type="Proteomes" id="UP000694395">
    <property type="component" value="Unplaced"/>
</dbReference>
<dbReference type="GO" id="GO:0005789">
    <property type="term" value="C:endoplasmic reticulum membrane"/>
    <property type="evidence" value="ECO:0007669"/>
    <property type="project" value="UniProtKB-SubCell"/>
</dbReference>
<dbReference type="GO" id="GO:0020037">
    <property type="term" value="F:heme binding"/>
    <property type="evidence" value="ECO:0007669"/>
    <property type="project" value="InterPro"/>
</dbReference>
<dbReference type="GO" id="GO:0005506">
    <property type="term" value="F:iron ion binding"/>
    <property type="evidence" value="ECO:0007669"/>
    <property type="project" value="InterPro"/>
</dbReference>
<dbReference type="GO" id="GO:0016712">
    <property type="term" value="F:oxidoreductase activity, acting on paired donors, with incorporation or reduction of molecular oxygen, reduced flavin or flavoprotein as one donor, and incorporation of one atom of oxygen"/>
    <property type="evidence" value="ECO:0007669"/>
    <property type="project" value="UniProtKB-EC"/>
</dbReference>
<dbReference type="GO" id="GO:0006082">
    <property type="term" value="P:organic acid metabolic process"/>
    <property type="evidence" value="ECO:0007669"/>
    <property type="project" value="TreeGrafter"/>
</dbReference>
<dbReference type="GO" id="GO:0006805">
    <property type="term" value="P:xenobiotic metabolic process"/>
    <property type="evidence" value="ECO:0007669"/>
    <property type="project" value="TreeGrafter"/>
</dbReference>
<dbReference type="FunFam" id="1.10.630.10:FF:000010">
    <property type="entry name" value="cytochrome P450 2W1 isoform X2"/>
    <property type="match status" value="1"/>
</dbReference>
<dbReference type="Gene3D" id="1.10.630.10">
    <property type="entry name" value="Cytochrome P450"/>
    <property type="match status" value="1"/>
</dbReference>
<dbReference type="InterPro" id="IPR001128">
    <property type="entry name" value="Cyt_P450"/>
</dbReference>
<dbReference type="InterPro" id="IPR017972">
    <property type="entry name" value="Cyt_P450_CS"/>
</dbReference>
<dbReference type="InterPro" id="IPR002401">
    <property type="entry name" value="Cyt_P450_E_grp-I"/>
</dbReference>
<dbReference type="InterPro" id="IPR036396">
    <property type="entry name" value="Cyt_P450_sf"/>
</dbReference>
<dbReference type="InterPro" id="IPR050182">
    <property type="entry name" value="Cytochrome_P450_fam2"/>
</dbReference>
<dbReference type="PANTHER" id="PTHR24300">
    <property type="entry name" value="CYTOCHROME P450 508A4-RELATED"/>
    <property type="match status" value="1"/>
</dbReference>
<dbReference type="PANTHER" id="PTHR24300:SF319">
    <property type="entry name" value="CYTOCHROME P450, FAMILY 2, SUBFAMILY AC, POLYPEPTIDE 1"/>
    <property type="match status" value="1"/>
</dbReference>
<dbReference type="Pfam" id="PF00067">
    <property type="entry name" value="p450"/>
    <property type="match status" value="1"/>
</dbReference>
<dbReference type="PRINTS" id="PR00463">
    <property type="entry name" value="EP450I"/>
</dbReference>
<dbReference type="PRINTS" id="PR00385">
    <property type="entry name" value="P450"/>
</dbReference>
<dbReference type="SUPFAM" id="SSF48264">
    <property type="entry name" value="Cytochrome P450"/>
    <property type="match status" value="1"/>
</dbReference>
<dbReference type="PROSITE" id="PS00086">
    <property type="entry name" value="CYTOCHROME_P450"/>
    <property type="match status" value="1"/>
</dbReference>